<comment type="similarity">
    <text evidence="1">Belongs to the bacterial ribosomal protein bL27 family.</text>
</comment>
<sequence length="94" mass="10285">MAHKKGTGSTRNGRDSQSKRLGVKRYGGQVVRAGNILVRQRGTKFHPGNNVGRGSDDTLFALIDGVVKFEYKTRSRQKISVYPVPQEEPATVAG</sequence>
<protein>
    <recommendedName>
        <fullName evidence="1">Large ribosomal subunit protein bL27</fullName>
    </recommendedName>
    <alternativeName>
        <fullName evidence="3">50S ribosomal protein L27</fullName>
    </alternativeName>
</protein>
<dbReference type="EMBL" id="CP001291">
    <property type="protein sequence ID" value="ACK71858.1"/>
    <property type="molecule type" value="Genomic_DNA"/>
</dbReference>
<dbReference type="RefSeq" id="WP_015955453.1">
    <property type="nucleotide sequence ID" value="NC_011729.1"/>
</dbReference>
<dbReference type="SMR" id="B7KFE2"/>
<dbReference type="STRING" id="65393.PCC7424_3465"/>
<dbReference type="KEGG" id="cyc:PCC7424_3465"/>
<dbReference type="eggNOG" id="COG0211">
    <property type="taxonomic scope" value="Bacteria"/>
</dbReference>
<dbReference type="HOGENOM" id="CLU_095424_4_0_3"/>
<dbReference type="OrthoDB" id="9803474at2"/>
<dbReference type="Proteomes" id="UP000002384">
    <property type="component" value="Chromosome"/>
</dbReference>
<dbReference type="GO" id="GO:0022625">
    <property type="term" value="C:cytosolic large ribosomal subunit"/>
    <property type="evidence" value="ECO:0007669"/>
    <property type="project" value="TreeGrafter"/>
</dbReference>
<dbReference type="GO" id="GO:0003735">
    <property type="term" value="F:structural constituent of ribosome"/>
    <property type="evidence" value="ECO:0007669"/>
    <property type="project" value="InterPro"/>
</dbReference>
<dbReference type="GO" id="GO:0006412">
    <property type="term" value="P:translation"/>
    <property type="evidence" value="ECO:0007669"/>
    <property type="project" value="UniProtKB-UniRule"/>
</dbReference>
<dbReference type="FunFam" id="2.40.50.100:FF:000004">
    <property type="entry name" value="50S ribosomal protein L27"/>
    <property type="match status" value="1"/>
</dbReference>
<dbReference type="Gene3D" id="2.40.50.100">
    <property type="match status" value="1"/>
</dbReference>
<dbReference type="HAMAP" id="MF_00539">
    <property type="entry name" value="Ribosomal_bL27"/>
    <property type="match status" value="1"/>
</dbReference>
<dbReference type="InterPro" id="IPR001684">
    <property type="entry name" value="Ribosomal_bL27"/>
</dbReference>
<dbReference type="InterPro" id="IPR018261">
    <property type="entry name" value="Ribosomal_bL27_CS"/>
</dbReference>
<dbReference type="NCBIfam" id="TIGR00062">
    <property type="entry name" value="L27"/>
    <property type="match status" value="1"/>
</dbReference>
<dbReference type="PANTHER" id="PTHR15893:SF0">
    <property type="entry name" value="LARGE RIBOSOMAL SUBUNIT PROTEIN BL27M"/>
    <property type="match status" value="1"/>
</dbReference>
<dbReference type="PANTHER" id="PTHR15893">
    <property type="entry name" value="RIBOSOMAL PROTEIN L27"/>
    <property type="match status" value="1"/>
</dbReference>
<dbReference type="Pfam" id="PF01016">
    <property type="entry name" value="Ribosomal_L27"/>
    <property type="match status" value="1"/>
</dbReference>
<dbReference type="PRINTS" id="PR00063">
    <property type="entry name" value="RIBOSOMALL27"/>
</dbReference>
<dbReference type="SUPFAM" id="SSF110324">
    <property type="entry name" value="Ribosomal L27 protein-like"/>
    <property type="match status" value="1"/>
</dbReference>
<dbReference type="PROSITE" id="PS00831">
    <property type="entry name" value="RIBOSOMAL_L27"/>
    <property type="match status" value="1"/>
</dbReference>
<gene>
    <name evidence="1" type="primary">rpmA</name>
    <name evidence="1" type="synonym">rpl27</name>
    <name type="ordered locus">PCC7424_3465</name>
</gene>
<evidence type="ECO:0000255" key="1">
    <source>
        <dbReference type="HAMAP-Rule" id="MF_00539"/>
    </source>
</evidence>
<evidence type="ECO:0000256" key="2">
    <source>
        <dbReference type="SAM" id="MobiDB-lite"/>
    </source>
</evidence>
<evidence type="ECO:0000305" key="3"/>
<feature type="chain" id="PRO_1000128730" description="Large ribosomal subunit protein bL27">
    <location>
        <begin position="1"/>
        <end position="94"/>
    </location>
</feature>
<feature type="region of interest" description="Disordered" evidence="2">
    <location>
        <begin position="1"/>
        <end position="25"/>
    </location>
</feature>
<organism>
    <name type="scientific">Gloeothece citriformis (strain PCC 7424)</name>
    <name type="common">Cyanothece sp. (strain PCC 7424)</name>
    <dbReference type="NCBI Taxonomy" id="65393"/>
    <lineage>
        <taxon>Bacteria</taxon>
        <taxon>Bacillati</taxon>
        <taxon>Cyanobacteriota</taxon>
        <taxon>Cyanophyceae</taxon>
        <taxon>Oscillatoriophycideae</taxon>
        <taxon>Chroococcales</taxon>
        <taxon>Aphanothecaceae</taxon>
        <taxon>Gloeothece</taxon>
        <taxon>Gloeothece citriformis</taxon>
    </lineage>
</organism>
<accession>B7KFE2</accession>
<proteinExistence type="inferred from homology"/>
<keyword id="KW-1185">Reference proteome</keyword>
<keyword id="KW-0687">Ribonucleoprotein</keyword>
<keyword id="KW-0689">Ribosomal protein</keyword>
<name>RL27_GLOC7</name>
<reference key="1">
    <citation type="journal article" date="2011" name="MBio">
        <title>Novel metabolic attributes of the genus Cyanothece, comprising a group of unicellular nitrogen-fixing Cyanobacteria.</title>
        <authorList>
            <person name="Bandyopadhyay A."/>
            <person name="Elvitigala T."/>
            <person name="Welsh E."/>
            <person name="Stockel J."/>
            <person name="Liberton M."/>
            <person name="Min H."/>
            <person name="Sherman L.A."/>
            <person name="Pakrasi H.B."/>
        </authorList>
    </citation>
    <scope>NUCLEOTIDE SEQUENCE [LARGE SCALE GENOMIC DNA]</scope>
    <source>
        <strain>PCC 7424</strain>
    </source>
</reference>